<proteinExistence type="predicted"/>
<keyword id="KW-0238">DNA-binding</keyword>
<keyword id="KW-0614">Plasmid</keyword>
<keyword id="KW-0615">Plasmid copy control</keyword>
<keyword id="KW-0804">Transcription</keyword>
<keyword id="KW-0805">Transcription regulation</keyword>
<feature type="chain" id="PRO_0000149724" description="Plasmid copy control protein CopR">
    <location>
        <begin position="1"/>
        <end position="92"/>
    </location>
</feature>
<feature type="domain" description="HTH cro/C1-type" evidence="1">
    <location>
        <begin position="9"/>
        <end position="62"/>
    </location>
</feature>
<feature type="DNA-binding region" description="H-T-H motif" evidence="1">
    <location>
        <begin position="20"/>
        <end position="39"/>
    </location>
</feature>
<feature type="region of interest" description="Disordered" evidence="2">
    <location>
        <begin position="1"/>
        <end position="40"/>
    </location>
</feature>
<feature type="region of interest" description="Disordered" evidence="2">
    <location>
        <begin position="63"/>
        <end position="92"/>
    </location>
</feature>
<feature type="compositionally biased region" description="Basic and acidic residues" evidence="2">
    <location>
        <begin position="1"/>
        <end position="27"/>
    </location>
</feature>
<sequence length="92" mass="10624">MELAFRESLKKMRGTKSKEKFSQELEMSRSNYSRIESGKSDPTIKTLEQIVKLTNSTLVVDLIPNEPTEPEPETEQVTLELEMEEEKSNDFV</sequence>
<organism>
    <name type="scientific">Streptococcus agalactiae</name>
    <dbReference type="NCBI Taxonomy" id="1311"/>
    <lineage>
        <taxon>Bacteria</taxon>
        <taxon>Bacillati</taxon>
        <taxon>Bacillota</taxon>
        <taxon>Bacilli</taxon>
        <taxon>Lactobacillales</taxon>
        <taxon>Streptococcaceae</taxon>
        <taxon>Streptococcus</taxon>
    </lineage>
</organism>
<comment type="function">
    <text>Involved in copy control of plasmid pIP501.</text>
</comment>
<gene>
    <name type="primary">copR</name>
</gene>
<geneLocation type="plasmid">
    <name>pIP501</name>
</geneLocation>
<reference key="1">
    <citation type="journal article" date="1992" name="Nucleic Acids Res.">
        <title>Copy number control of the streptococcal plasmid pIP501 occurs at three levels.</title>
        <authorList>
            <person name="Brantl S."/>
            <person name="Behnke D."/>
        </authorList>
    </citation>
    <scope>NUCLEOTIDE SEQUENCE [GENOMIC DNA]</scope>
</reference>
<reference key="2">
    <citation type="journal article" date="1994" name="Gene">
        <title>Complete nucleotide sequence of plasmid pGB3631, a derivative of the Streptococcus agalactiae plasmid pIP501.</title>
        <authorList>
            <person name="Brantl S."/>
            <person name="Kummer C."/>
            <person name="Behnke D."/>
        </authorList>
    </citation>
    <scope>NUCLEOTIDE SEQUENCE [GENOMIC DNA]</scope>
</reference>
<dbReference type="EMBL" id="X62150">
    <property type="protein sequence ID" value="CAA44075.1"/>
    <property type="molecule type" value="Genomic_DNA"/>
</dbReference>
<dbReference type="EMBL" id="X72021">
    <property type="protein sequence ID" value="CAA50904.1"/>
    <property type="molecule type" value="Genomic_DNA"/>
</dbReference>
<dbReference type="PIR" id="S22829">
    <property type="entry name" value="S22829"/>
</dbReference>
<dbReference type="RefSeq" id="NP_053001.1">
    <property type="nucleotide sequence ID" value="NC_002136.1"/>
</dbReference>
<dbReference type="RefSeq" id="WP_010891345.1">
    <property type="nucleotide sequence ID" value="NC_002136.1"/>
</dbReference>
<dbReference type="GO" id="GO:0003677">
    <property type="term" value="F:DNA binding"/>
    <property type="evidence" value="ECO:0007669"/>
    <property type="project" value="UniProtKB-KW"/>
</dbReference>
<dbReference type="GO" id="GO:0006276">
    <property type="term" value="P:plasmid maintenance"/>
    <property type="evidence" value="ECO:0007669"/>
    <property type="project" value="UniProtKB-KW"/>
</dbReference>
<dbReference type="CDD" id="cd00093">
    <property type="entry name" value="HTH_XRE"/>
    <property type="match status" value="1"/>
</dbReference>
<dbReference type="Gene3D" id="1.10.260.40">
    <property type="entry name" value="lambda repressor-like DNA-binding domains"/>
    <property type="match status" value="1"/>
</dbReference>
<dbReference type="InterPro" id="IPR001387">
    <property type="entry name" value="Cro/C1-type_HTH"/>
</dbReference>
<dbReference type="InterPro" id="IPR010982">
    <property type="entry name" value="Lambda_DNA-bd_dom_sf"/>
</dbReference>
<dbReference type="Pfam" id="PF01381">
    <property type="entry name" value="HTH_3"/>
    <property type="match status" value="1"/>
</dbReference>
<dbReference type="SMART" id="SM00530">
    <property type="entry name" value="HTH_XRE"/>
    <property type="match status" value="1"/>
</dbReference>
<dbReference type="SUPFAM" id="SSF47413">
    <property type="entry name" value="lambda repressor-like DNA-binding domains"/>
    <property type="match status" value="1"/>
</dbReference>
<dbReference type="PROSITE" id="PS50943">
    <property type="entry name" value="HTH_CROC1"/>
    <property type="match status" value="1"/>
</dbReference>
<protein>
    <recommendedName>
        <fullName>Plasmid copy control protein CopR</fullName>
    </recommendedName>
</protein>
<evidence type="ECO:0000255" key="1">
    <source>
        <dbReference type="PROSITE-ProRule" id="PRU00257"/>
    </source>
</evidence>
<evidence type="ECO:0000256" key="2">
    <source>
        <dbReference type="SAM" id="MobiDB-lite"/>
    </source>
</evidence>
<accession>P24716</accession>
<name>COPR_STRAG</name>